<sequence length="549" mass="63724">MLNQKIQNPNPDELMIEVDLCYELDPYELKLDEMIEAEPEPEMIEGLPASDALTPADRYLELFEHVQSAKIFPDSKTFPDCAPKMDPLDILIRYRKVRRHRDFDLRKFVENHFWLPEVYSSEYVSDPQNSLKEHIDQLWPVLTREPQDHIPWSSLLALPQSYIVPGGRFSETYYWDSYFTMLGLAESGREDLLKCMADNFAWMIENYGHIPNGNRTYYLSRSQPPVFALMVELFEEDGVRGARRYLDHLKMEYAFWMDGAESLIPNQAYRHVVRMPDGSLLNRYWDDRDTPRDESWLEDVETAKHSGRPPNEVYRDLRAGAASGWDYSSRWLRDTGRLASIRTTQFIPIDLNAFLFKLESAIANISALKGEKETEALFRQKASARRDAVNRYLWDDENGIYRDYDWRREQLALFSAAAIVPLYVGMANHEQADRLANAVRSRLLTPGGILASEYETGEQWDKPNGWAPLQWMAIQGFKMYGDDLLGDEIARNWLKTVNQFYLEQHKLIEKYHIADGVPREGGGGEYPLQDGFGWTNGVVRRLIGLYGEP</sequence>
<gene>
    <name evidence="1" type="primary">treF</name>
    <name type="ordered locus">Ecok1_35070</name>
    <name type="ORF">APECO1_2929</name>
</gene>
<evidence type="ECO:0000255" key="1">
    <source>
        <dbReference type="HAMAP-Rule" id="MF_01059"/>
    </source>
</evidence>
<proteinExistence type="inferred from homology"/>
<organism>
    <name type="scientific">Escherichia coli O1:K1 / APEC</name>
    <dbReference type="NCBI Taxonomy" id="405955"/>
    <lineage>
        <taxon>Bacteria</taxon>
        <taxon>Pseudomonadati</taxon>
        <taxon>Pseudomonadota</taxon>
        <taxon>Gammaproteobacteria</taxon>
        <taxon>Enterobacterales</taxon>
        <taxon>Enterobacteriaceae</taxon>
        <taxon>Escherichia</taxon>
    </lineage>
</organism>
<reference key="1">
    <citation type="journal article" date="2007" name="J. Bacteriol.">
        <title>The genome sequence of avian pathogenic Escherichia coli strain O1:K1:H7 shares strong similarities with human extraintestinal pathogenic E. coli genomes.</title>
        <authorList>
            <person name="Johnson T.J."/>
            <person name="Kariyawasam S."/>
            <person name="Wannemuehler Y."/>
            <person name="Mangiamele P."/>
            <person name="Johnson S.J."/>
            <person name="Doetkott C."/>
            <person name="Skyberg J.A."/>
            <person name="Lynne A.M."/>
            <person name="Johnson J.R."/>
            <person name="Nolan L.K."/>
        </authorList>
    </citation>
    <scope>NUCLEOTIDE SEQUENCE [LARGE SCALE GENOMIC DNA]</scope>
</reference>
<comment type="function">
    <text evidence="1">Hydrolyzes trehalose to glucose. Could be involved, in cells returning to low osmolarity conditions, in the utilization of the accumulated cytoplasmic trehalose, which was synthesized in response to high osmolarity.</text>
</comment>
<comment type="catalytic activity">
    <reaction evidence="1">
        <text>alpha,alpha-trehalose + H2O = alpha-D-glucose + beta-D-glucose</text>
        <dbReference type="Rhea" id="RHEA:32675"/>
        <dbReference type="ChEBI" id="CHEBI:15377"/>
        <dbReference type="ChEBI" id="CHEBI:15903"/>
        <dbReference type="ChEBI" id="CHEBI:16551"/>
        <dbReference type="ChEBI" id="CHEBI:17925"/>
        <dbReference type="EC" id="3.2.1.28"/>
    </reaction>
</comment>
<comment type="pathway">
    <text evidence="1">Glycan degradation; trehalose degradation; D-glucose from alpha,alpha-trehalose: step 1/1.</text>
</comment>
<comment type="subunit">
    <text evidence="1">Monomer.</text>
</comment>
<comment type="subcellular location">
    <subcellularLocation>
        <location evidence="1">Cytoplasm</location>
    </subcellularLocation>
</comment>
<comment type="similarity">
    <text evidence="1">Belongs to the glycosyl hydrolase 37 family.</text>
</comment>
<accession>A1AH61</accession>
<protein>
    <recommendedName>
        <fullName evidence="1">Cytoplasmic trehalase</fullName>
        <ecNumber evidence="1">3.2.1.28</ecNumber>
    </recommendedName>
    <alternativeName>
        <fullName evidence="1">Alpha,alpha-trehalase</fullName>
    </alternativeName>
    <alternativeName>
        <fullName evidence="1">Alpha,alpha-trehalose glucohydrolase</fullName>
    </alternativeName>
</protein>
<feature type="chain" id="PRO_1000064442" description="Cytoplasmic trehalase">
    <location>
        <begin position="1"/>
        <end position="549"/>
    </location>
</feature>
<feature type="active site" description="Proton donor/acceptor" evidence="1">
    <location>
        <position position="326"/>
    </location>
</feature>
<feature type="active site" description="Proton donor/acceptor" evidence="1">
    <location>
        <position position="509"/>
    </location>
</feature>
<feature type="binding site" evidence="1">
    <location>
        <position position="168"/>
    </location>
    <ligand>
        <name>substrate</name>
    </ligand>
</feature>
<feature type="binding site" evidence="1">
    <location>
        <begin position="175"/>
        <end position="176"/>
    </location>
    <ligand>
        <name>substrate</name>
    </ligand>
</feature>
<feature type="binding site" evidence="1">
    <location>
        <position position="212"/>
    </location>
    <ligand>
        <name>substrate</name>
    </ligand>
</feature>
<feature type="binding site" evidence="1">
    <location>
        <begin position="221"/>
        <end position="223"/>
    </location>
    <ligand>
        <name>substrate</name>
    </ligand>
</feature>
<feature type="binding site" evidence="1">
    <location>
        <begin position="292"/>
        <end position="294"/>
    </location>
    <ligand>
        <name>substrate</name>
    </ligand>
</feature>
<feature type="binding site" evidence="1">
    <location>
        <position position="324"/>
    </location>
    <ligand>
        <name>substrate</name>
    </ligand>
</feature>
<feature type="binding site" evidence="1">
    <location>
        <position position="525"/>
    </location>
    <ligand>
        <name>substrate</name>
    </ligand>
</feature>
<dbReference type="EC" id="3.2.1.28" evidence="1"/>
<dbReference type="EMBL" id="CP000468">
    <property type="protein sequence ID" value="ABJ03001.1"/>
    <property type="molecule type" value="Genomic_DNA"/>
</dbReference>
<dbReference type="RefSeq" id="WP_000934214.1">
    <property type="nucleotide sequence ID" value="NZ_CADILS010000015.1"/>
</dbReference>
<dbReference type="SMR" id="A1AH61"/>
<dbReference type="CAZy" id="GH37">
    <property type="family name" value="Glycoside Hydrolase Family 37"/>
</dbReference>
<dbReference type="KEGG" id="ecv:APECO1_2929"/>
<dbReference type="HOGENOM" id="CLU_006451_3_1_6"/>
<dbReference type="UniPathway" id="UPA00300">
    <property type="reaction ID" value="UER00535"/>
</dbReference>
<dbReference type="Proteomes" id="UP000008216">
    <property type="component" value="Chromosome"/>
</dbReference>
<dbReference type="GO" id="GO:0005737">
    <property type="term" value="C:cytoplasm"/>
    <property type="evidence" value="ECO:0007669"/>
    <property type="project" value="UniProtKB-SubCell"/>
</dbReference>
<dbReference type="GO" id="GO:0004555">
    <property type="term" value="F:alpha,alpha-trehalase activity"/>
    <property type="evidence" value="ECO:0007669"/>
    <property type="project" value="UniProtKB-UniRule"/>
</dbReference>
<dbReference type="GO" id="GO:0071474">
    <property type="term" value="P:cellular hyperosmotic response"/>
    <property type="evidence" value="ECO:0007669"/>
    <property type="project" value="InterPro"/>
</dbReference>
<dbReference type="GO" id="GO:0005993">
    <property type="term" value="P:trehalose catabolic process"/>
    <property type="evidence" value="ECO:0007669"/>
    <property type="project" value="UniProtKB-UniRule"/>
</dbReference>
<dbReference type="FunFam" id="1.50.10.10:FF:000003">
    <property type="entry name" value="Cytoplasmic trehalase"/>
    <property type="match status" value="1"/>
</dbReference>
<dbReference type="Gene3D" id="1.50.10.10">
    <property type="match status" value="1"/>
</dbReference>
<dbReference type="HAMAP" id="MF_01059">
    <property type="entry name" value="Cyt_trehalase"/>
    <property type="match status" value="1"/>
</dbReference>
<dbReference type="InterPro" id="IPR008928">
    <property type="entry name" value="6-hairpin_glycosidase_sf"/>
</dbReference>
<dbReference type="InterPro" id="IPR012341">
    <property type="entry name" value="6hp_glycosidase-like_sf"/>
</dbReference>
<dbReference type="InterPro" id="IPR023715">
    <property type="entry name" value="Cyt_trehalase"/>
</dbReference>
<dbReference type="InterPro" id="IPR001661">
    <property type="entry name" value="Glyco_hydro_37"/>
</dbReference>
<dbReference type="InterPro" id="IPR018232">
    <property type="entry name" value="Glyco_hydro_37_CS"/>
</dbReference>
<dbReference type="NCBIfam" id="NF009773">
    <property type="entry name" value="PRK13270.1"/>
    <property type="match status" value="1"/>
</dbReference>
<dbReference type="NCBIfam" id="NF009774">
    <property type="entry name" value="PRK13271.1"/>
    <property type="match status" value="1"/>
</dbReference>
<dbReference type="PANTHER" id="PTHR23403:SF8">
    <property type="entry name" value="CYTOPLASMIC TREHALASE"/>
    <property type="match status" value="1"/>
</dbReference>
<dbReference type="PANTHER" id="PTHR23403">
    <property type="entry name" value="TREHALASE"/>
    <property type="match status" value="1"/>
</dbReference>
<dbReference type="Pfam" id="PF01204">
    <property type="entry name" value="Trehalase"/>
    <property type="match status" value="1"/>
</dbReference>
<dbReference type="PRINTS" id="PR00744">
    <property type="entry name" value="GLHYDRLASE37"/>
</dbReference>
<dbReference type="SUPFAM" id="SSF48208">
    <property type="entry name" value="Six-hairpin glycosidases"/>
    <property type="match status" value="1"/>
</dbReference>
<dbReference type="PROSITE" id="PS00927">
    <property type="entry name" value="TREHALASE_1"/>
    <property type="match status" value="1"/>
</dbReference>
<dbReference type="PROSITE" id="PS00928">
    <property type="entry name" value="TREHALASE_2"/>
    <property type="match status" value="1"/>
</dbReference>
<keyword id="KW-0963">Cytoplasm</keyword>
<keyword id="KW-0326">Glycosidase</keyword>
<keyword id="KW-0378">Hydrolase</keyword>
<keyword id="KW-1185">Reference proteome</keyword>
<name>TREF_ECOK1</name>